<organism>
    <name type="scientific">Staphylococcus epidermidis (strain ATCC 12228 / FDA PCI 1200)</name>
    <dbReference type="NCBI Taxonomy" id="176280"/>
    <lineage>
        <taxon>Bacteria</taxon>
        <taxon>Bacillati</taxon>
        <taxon>Bacillota</taxon>
        <taxon>Bacilli</taxon>
        <taxon>Bacillales</taxon>
        <taxon>Staphylococcaceae</taxon>
        <taxon>Staphylococcus</taxon>
    </lineage>
</organism>
<evidence type="ECO:0000255" key="1">
    <source>
        <dbReference type="HAMAP-Rule" id="MF_00347"/>
    </source>
</evidence>
<evidence type="ECO:0000256" key="2">
    <source>
        <dbReference type="SAM" id="MobiDB-lite"/>
    </source>
</evidence>
<dbReference type="EC" id="2.7.4.1" evidence="1"/>
<dbReference type="EMBL" id="AE015929">
    <property type="protein sequence ID" value="AAO05675.1"/>
    <property type="molecule type" value="Genomic_DNA"/>
</dbReference>
<dbReference type="RefSeq" id="NP_765589.1">
    <property type="nucleotide sequence ID" value="NC_004461.1"/>
</dbReference>
<dbReference type="SMR" id="Q8CR71"/>
<dbReference type="KEGG" id="sep:SE_2034"/>
<dbReference type="PATRIC" id="fig|176280.10.peg.1987"/>
<dbReference type="eggNOG" id="COG0855">
    <property type="taxonomic scope" value="Bacteria"/>
</dbReference>
<dbReference type="HOGENOM" id="CLU_009678_5_0_9"/>
<dbReference type="OrthoDB" id="9761456at2"/>
<dbReference type="Proteomes" id="UP000001411">
    <property type="component" value="Chromosome"/>
</dbReference>
<dbReference type="GO" id="GO:0009358">
    <property type="term" value="C:polyphosphate kinase complex"/>
    <property type="evidence" value="ECO:0007669"/>
    <property type="project" value="InterPro"/>
</dbReference>
<dbReference type="GO" id="GO:0005524">
    <property type="term" value="F:ATP binding"/>
    <property type="evidence" value="ECO:0007669"/>
    <property type="project" value="UniProtKB-KW"/>
</dbReference>
<dbReference type="GO" id="GO:0046872">
    <property type="term" value="F:metal ion binding"/>
    <property type="evidence" value="ECO:0007669"/>
    <property type="project" value="UniProtKB-KW"/>
</dbReference>
<dbReference type="GO" id="GO:0008976">
    <property type="term" value="F:polyphosphate kinase activity"/>
    <property type="evidence" value="ECO:0007669"/>
    <property type="project" value="UniProtKB-UniRule"/>
</dbReference>
<dbReference type="GO" id="GO:0006799">
    <property type="term" value="P:polyphosphate biosynthetic process"/>
    <property type="evidence" value="ECO:0007669"/>
    <property type="project" value="UniProtKB-UniRule"/>
</dbReference>
<dbReference type="CDD" id="cd09165">
    <property type="entry name" value="PLDc_PaPPK1_C1_like"/>
    <property type="match status" value="1"/>
</dbReference>
<dbReference type="CDD" id="cd09168">
    <property type="entry name" value="PLDc_PaPPK1_C2_like"/>
    <property type="match status" value="1"/>
</dbReference>
<dbReference type="Gene3D" id="3.30.870.10">
    <property type="entry name" value="Endonuclease Chain A"/>
    <property type="match status" value="2"/>
</dbReference>
<dbReference type="Gene3D" id="3.30.1840.10">
    <property type="entry name" value="Polyphosphate kinase middle domain"/>
    <property type="match status" value="1"/>
</dbReference>
<dbReference type="Gene3D" id="1.20.58.310">
    <property type="entry name" value="Polyphosphate kinase N-terminal domain"/>
    <property type="match status" value="1"/>
</dbReference>
<dbReference type="HAMAP" id="MF_00347">
    <property type="entry name" value="Polyphosphate_kinase"/>
    <property type="match status" value="1"/>
</dbReference>
<dbReference type="InterPro" id="IPR003414">
    <property type="entry name" value="PP_kinase"/>
</dbReference>
<dbReference type="InterPro" id="IPR041108">
    <property type="entry name" value="PP_kinase_C_1"/>
</dbReference>
<dbReference type="InterPro" id="IPR024953">
    <property type="entry name" value="PP_kinase_middle"/>
</dbReference>
<dbReference type="InterPro" id="IPR036830">
    <property type="entry name" value="PP_kinase_middle_dom_sf"/>
</dbReference>
<dbReference type="InterPro" id="IPR025200">
    <property type="entry name" value="PPK_C_dom2"/>
</dbReference>
<dbReference type="InterPro" id="IPR025198">
    <property type="entry name" value="PPK_N_dom"/>
</dbReference>
<dbReference type="InterPro" id="IPR036832">
    <property type="entry name" value="PPK_N_dom_sf"/>
</dbReference>
<dbReference type="NCBIfam" id="TIGR03705">
    <property type="entry name" value="poly_P_kin"/>
    <property type="match status" value="1"/>
</dbReference>
<dbReference type="NCBIfam" id="NF003917">
    <property type="entry name" value="PRK05443.1-1"/>
    <property type="match status" value="1"/>
</dbReference>
<dbReference type="NCBIfam" id="NF003918">
    <property type="entry name" value="PRK05443.1-2"/>
    <property type="match status" value="1"/>
</dbReference>
<dbReference type="NCBIfam" id="NF003920">
    <property type="entry name" value="PRK05443.2-1"/>
    <property type="match status" value="1"/>
</dbReference>
<dbReference type="NCBIfam" id="NF003921">
    <property type="entry name" value="PRK05443.2-2"/>
    <property type="match status" value="1"/>
</dbReference>
<dbReference type="PANTHER" id="PTHR30218">
    <property type="entry name" value="POLYPHOSPHATE KINASE"/>
    <property type="match status" value="1"/>
</dbReference>
<dbReference type="PANTHER" id="PTHR30218:SF0">
    <property type="entry name" value="POLYPHOSPHATE KINASE"/>
    <property type="match status" value="1"/>
</dbReference>
<dbReference type="Pfam" id="PF02503">
    <property type="entry name" value="PP_kinase"/>
    <property type="match status" value="1"/>
</dbReference>
<dbReference type="Pfam" id="PF13090">
    <property type="entry name" value="PP_kinase_C"/>
    <property type="match status" value="1"/>
</dbReference>
<dbReference type="Pfam" id="PF17941">
    <property type="entry name" value="PP_kinase_C_1"/>
    <property type="match status" value="1"/>
</dbReference>
<dbReference type="Pfam" id="PF13089">
    <property type="entry name" value="PP_kinase_N"/>
    <property type="match status" value="1"/>
</dbReference>
<dbReference type="PIRSF" id="PIRSF015589">
    <property type="entry name" value="PP_kinase"/>
    <property type="match status" value="1"/>
</dbReference>
<dbReference type="SUPFAM" id="SSF56024">
    <property type="entry name" value="Phospholipase D/nuclease"/>
    <property type="match status" value="2"/>
</dbReference>
<dbReference type="SUPFAM" id="SSF143724">
    <property type="entry name" value="PHP14-like"/>
    <property type="match status" value="1"/>
</dbReference>
<dbReference type="SUPFAM" id="SSF140356">
    <property type="entry name" value="PPK N-terminal domain-like"/>
    <property type="match status" value="1"/>
</dbReference>
<proteinExistence type="inferred from homology"/>
<accession>Q8CR71</accession>
<feature type="chain" id="PRO_0000128657" description="Polyphosphate kinase">
    <location>
        <begin position="1"/>
        <end position="734"/>
    </location>
</feature>
<feature type="domain" description="PLD phosphodiesterase" evidence="1">
    <location>
        <begin position="447"/>
        <end position="481"/>
    </location>
</feature>
<feature type="region of interest" description="Disordered" evidence="2">
    <location>
        <begin position="705"/>
        <end position="734"/>
    </location>
</feature>
<feature type="active site" description="Phosphohistidine intermediate" evidence="1">
    <location>
        <position position="452"/>
    </location>
</feature>
<feature type="binding site" evidence="1">
    <location>
        <position position="67"/>
    </location>
    <ligand>
        <name>ATP</name>
        <dbReference type="ChEBI" id="CHEBI:30616"/>
    </ligand>
</feature>
<feature type="binding site" evidence="1">
    <location>
        <position position="392"/>
    </location>
    <ligand>
        <name>Mg(2+)</name>
        <dbReference type="ChEBI" id="CHEBI:18420"/>
    </ligand>
</feature>
<feature type="binding site" evidence="1">
    <location>
        <position position="422"/>
    </location>
    <ligand>
        <name>Mg(2+)</name>
        <dbReference type="ChEBI" id="CHEBI:18420"/>
    </ligand>
</feature>
<feature type="binding site" evidence="1">
    <location>
        <position position="485"/>
    </location>
    <ligand>
        <name>ATP</name>
        <dbReference type="ChEBI" id="CHEBI:30616"/>
    </ligand>
</feature>
<feature type="binding site" evidence="1">
    <location>
        <position position="581"/>
    </location>
    <ligand>
        <name>ATP</name>
        <dbReference type="ChEBI" id="CHEBI:30616"/>
    </ligand>
</feature>
<feature type="binding site" evidence="1">
    <location>
        <position position="609"/>
    </location>
    <ligand>
        <name>ATP</name>
        <dbReference type="ChEBI" id="CHEBI:30616"/>
    </ligand>
</feature>
<comment type="function">
    <text evidence="1">Catalyzes the reversible transfer of the terminal phosphate of ATP to form a long-chain polyphosphate (polyP).</text>
</comment>
<comment type="catalytic activity">
    <reaction evidence="1">
        <text>[phosphate](n) + ATP = [phosphate](n+1) + ADP</text>
        <dbReference type="Rhea" id="RHEA:19573"/>
        <dbReference type="Rhea" id="RHEA-COMP:9859"/>
        <dbReference type="Rhea" id="RHEA-COMP:14280"/>
        <dbReference type="ChEBI" id="CHEBI:16838"/>
        <dbReference type="ChEBI" id="CHEBI:30616"/>
        <dbReference type="ChEBI" id="CHEBI:456216"/>
        <dbReference type="EC" id="2.7.4.1"/>
    </reaction>
</comment>
<comment type="cofactor">
    <cofactor evidence="1">
        <name>Mg(2+)</name>
        <dbReference type="ChEBI" id="CHEBI:18420"/>
    </cofactor>
</comment>
<comment type="PTM">
    <text evidence="1">An intermediate of this reaction is the autophosphorylated ppk in which a phosphate is covalently linked to a histidine residue through a N-P bond.</text>
</comment>
<comment type="similarity">
    <text evidence="1">Belongs to the polyphosphate kinase 1 (PPK1) family.</text>
</comment>
<name>PPK1_STAES</name>
<sequence>MHNKDKLMRCMYSMQTRLGEKDINLPQYYNNRELSWLDFNYRVLQESYDKNNPLLEKLNFISIFSSNLDEFFMVRVAGLKDQVKMGYDKPENKAQMTPQEQLDAIKIKNTDYVNTQYQRYNELIKELANYDIEMVKPEDLSDALIEKLEQEFKLSVLPTLTPLGIDAYHPFPKLNNKSLNIFVDIDTEDAINSAIVQIPSLIPRFLTLNEGTKQYVVMVEDVITYFINYLFTGYEVLNTFTFRITRNADLTIHEDGAEDLLIEIERFLKERKSGSAVRLELDCRTSEKENVEWLINQLEIEDNDIYYLDGPLDLTFLFGLVDHLSHKLKYLTYEKYTPQPPRSLGNKNIYQLSLERDIFFHHPYESFEPIVDFIRQAADDPNTIAIKQTLYRVSKDSPIINSLKEAAENGKQVTVLVELKARFDEENNVHWARMLEDAGCHVIYGMTHLKTHSKIALVVKRINNELTSFVHLGTGNYNDKTAKLYTDMGIITTNKDIAEDAINFFNYLSGYSTKPEYNKLIVAPYDIRDVFIDRIDKEIRSHLQHGNGKIMMKMNSLTDKTIIEKLFEASQAGVKIQLIIRGICCLKPGIPGISENIEVVSIVGRLLEHSRIYYFHNNSEAHIYLSSADVMTRNMIKRVEILFPVEDKSIGQRLVNYMNLQLSDNQKGRYQDAQGLYHYVENNSSPLNSQSYLMQEAIKYGEELKKQSVQPSGQPVHSRRGGSWMRKLKNTFKR</sequence>
<gene>
    <name evidence="1" type="primary">ppk</name>
    <name type="ordered locus">SE_2034</name>
</gene>
<keyword id="KW-0067">ATP-binding</keyword>
<keyword id="KW-0418">Kinase</keyword>
<keyword id="KW-0460">Magnesium</keyword>
<keyword id="KW-0479">Metal-binding</keyword>
<keyword id="KW-0547">Nucleotide-binding</keyword>
<keyword id="KW-0597">Phosphoprotein</keyword>
<keyword id="KW-0808">Transferase</keyword>
<protein>
    <recommendedName>
        <fullName evidence="1">Polyphosphate kinase</fullName>
        <ecNumber evidence="1">2.7.4.1</ecNumber>
    </recommendedName>
    <alternativeName>
        <fullName evidence="1">ATP-polyphosphate phosphotransferase</fullName>
    </alternativeName>
    <alternativeName>
        <fullName evidence="1">Polyphosphoric acid kinase</fullName>
    </alternativeName>
</protein>
<reference key="1">
    <citation type="journal article" date="2003" name="Mol. Microbiol.">
        <title>Genome-based analysis of virulence genes in a non-biofilm-forming Staphylococcus epidermidis strain (ATCC 12228).</title>
        <authorList>
            <person name="Zhang Y.-Q."/>
            <person name="Ren S.-X."/>
            <person name="Li H.-L."/>
            <person name="Wang Y.-X."/>
            <person name="Fu G."/>
            <person name="Yang J."/>
            <person name="Qin Z.-Q."/>
            <person name="Miao Y.-G."/>
            <person name="Wang W.-Y."/>
            <person name="Chen R.-S."/>
            <person name="Shen Y."/>
            <person name="Chen Z."/>
            <person name="Yuan Z.-H."/>
            <person name="Zhao G.-P."/>
            <person name="Qu D."/>
            <person name="Danchin A."/>
            <person name="Wen Y.-M."/>
        </authorList>
    </citation>
    <scope>NUCLEOTIDE SEQUENCE [LARGE SCALE GENOMIC DNA]</scope>
    <source>
        <strain>ATCC 12228 / FDA PCI 1200</strain>
    </source>
</reference>